<reference key="1">
    <citation type="journal article" date="2003" name="Nucleic Acids Res.">
        <title>The complete genome sequence and analysis of Corynebacterium diphtheriae NCTC13129.</title>
        <authorList>
            <person name="Cerdeno-Tarraga A.-M."/>
            <person name="Efstratiou A."/>
            <person name="Dover L.G."/>
            <person name="Holden M.T.G."/>
            <person name="Pallen M.J."/>
            <person name="Bentley S.D."/>
            <person name="Besra G.S."/>
            <person name="Churcher C.M."/>
            <person name="James K.D."/>
            <person name="De Zoysa A."/>
            <person name="Chillingworth T."/>
            <person name="Cronin A."/>
            <person name="Dowd L."/>
            <person name="Feltwell T."/>
            <person name="Hamlin N."/>
            <person name="Holroyd S."/>
            <person name="Jagels K."/>
            <person name="Moule S."/>
            <person name="Quail M.A."/>
            <person name="Rabbinowitsch E."/>
            <person name="Rutherford K.M."/>
            <person name="Thomson N.R."/>
            <person name="Unwin L."/>
            <person name="Whitehead S."/>
            <person name="Barrell B.G."/>
            <person name="Parkhill J."/>
        </authorList>
    </citation>
    <scope>NUCLEOTIDE SEQUENCE [LARGE SCALE GENOMIC DNA]</scope>
    <source>
        <strain>ATCC 700971 / NCTC 13129 / Biotype gravis</strain>
    </source>
</reference>
<organism>
    <name type="scientific">Corynebacterium diphtheriae (strain ATCC 700971 / NCTC 13129 / Biotype gravis)</name>
    <dbReference type="NCBI Taxonomy" id="257309"/>
    <lineage>
        <taxon>Bacteria</taxon>
        <taxon>Bacillati</taxon>
        <taxon>Actinomycetota</taxon>
        <taxon>Actinomycetes</taxon>
        <taxon>Mycobacteriales</taxon>
        <taxon>Corynebacteriaceae</taxon>
        <taxon>Corynebacterium</taxon>
    </lineage>
</organism>
<protein>
    <recommendedName>
        <fullName evidence="1">LexA repressor</fullName>
        <ecNumber evidence="1">3.4.21.88</ecNumber>
    </recommendedName>
</protein>
<sequence length="237" mass="25707">MPVKDSSSNKKNQIGKLSERQRRILEVITDAVSLRGYPPSIREIGDAAGLQSTSSVAYQLKELEKKGYLRRDPNKPRAVDVRALPDPIPSKPGRKPGPKKSSVAISPDPAETSPTSFVPIVGSIAAGNPILAEENVDGYFPFPSEIVGDGDLFMLQVEGESMRDAGILHHDWVVVRSQPVAEQGEFVAALIEGEATVKEFHSDSSGVWLLPHNDAFDPIPAEHAEIMGKVVSILRKL</sequence>
<proteinExistence type="inferred from homology"/>
<keyword id="KW-0068">Autocatalytic cleavage</keyword>
<keyword id="KW-0227">DNA damage</keyword>
<keyword id="KW-0234">DNA repair</keyword>
<keyword id="KW-0235">DNA replication</keyword>
<keyword id="KW-0238">DNA-binding</keyword>
<keyword id="KW-0378">Hydrolase</keyword>
<keyword id="KW-1185">Reference proteome</keyword>
<keyword id="KW-0678">Repressor</keyword>
<keyword id="KW-0742">SOS response</keyword>
<keyword id="KW-0804">Transcription</keyword>
<keyword id="KW-0805">Transcription regulation</keyword>
<feature type="chain" id="PRO_0000170027" description="LexA repressor">
    <location>
        <begin position="1"/>
        <end position="237"/>
    </location>
</feature>
<feature type="DNA-binding region" description="H-T-H motif" evidence="1">
    <location>
        <begin position="41"/>
        <end position="61"/>
    </location>
</feature>
<feature type="region of interest" description="Disordered" evidence="2">
    <location>
        <begin position="1"/>
        <end position="20"/>
    </location>
</feature>
<feature type="region of interest" description="Disordered" evidence="2">
    <location>
        <begin position="67"/>
        <end position="112"/>
    </location>
</feature>
<feature type="compositionally biased region" description="Polar residues" evidence="2">
    <location>
        <begin position="1"/>
        <end position="12"/>
    </location>
</feature>
<feature type="compositionally biased region" description="Basic and acidic residues" evidence="2">
    <location>
        <begin position="67"/>
        <end position="80"/>
    </location>
</feature>
<feature type="active site" description="For autocatalytic cleavage activity" evidence="1">
    <location>
        <position position="161"/>
    </location>
</feature>
<feature type="active site" description="For autocatalytic cleavage activity" evidence="1">
    <location>
        <position position="198"/>
    </location>
</feature>
<feature type="site" description="Cleavage; by autolysis" evidence="1">
    <location>
        <begin position="126"/>
        <end position="127"/>
    </location>
</feature>
<evidence type="ECO:0000255" key="1">
    <source>
        <dbReference type="HAMAP-Rule" id="MF_00015"/>
    </source>
</evidence>
<evidence type="ECO:0000256" key="2">
    <source>
        <dbReference type="SAM" id="MobiDB-lite"/>
    </source>
</evidence>
<gene>
    <name evidence="1" type="primary">lexA</name>
    <name type="ordered locus">DIP1426</name>
</gene>
<comment type="function">
    <text evidence="1">Represses a number of genes involved in the response to DNA damage (SOS response), including recA and lexA. In the presence of single-stranded DNA, RecA interacts with LexA causing an autocatalytic cleavage which disrupts the DNA-binding part of LexA, leading to derepression of the SOS regulon and eventually DNA repair.</text>
</comment>
<comment type="catalytic activity">
    <reaction evidence="1">
        <text>Hydrolysis of Ala-|-Gly bond in repressor LexA.</text>
        <dbReference type="EC" id="3.4.21.88"/>
    </reaction>
</comment>
<comment type="subunit">
    <text evidence="1">Homodimer.</text>
</comment>
<comment type="similarity">
    <text evidence="1">Belongs to the peptidase S24 family.</text>
</comment>
<dbReference type="EC" id="3.4.21.88" evidence="1"/>
<dbReference type="EMBL" id="BX248358">
    <property type="protein sequence ID" value="CAE49957.1"/>
    <property type="molecule type" value="Genomic_DNA"/>
</dbReference>
<dbReference type="RefSeq" id="WP_010935061.1">
    <property type="nucleotide sequence ID" value="NC_002935.2"/>
</dbReference>
<dbReference type="SMR" id="P61607"/>
<dbReference type="STRING" id="257309.DIP1426"/>
<dbReference type="MEROPS" id="S24.001"/>
<dbReference type="KEGG" id="cdi:DIP1426"/>
<dbReference type="HOGENOM" id="CLU_066192_45_0_11"/>
<dbReference type="Proteomes" id="UP000002198">
    <property type="component" value="Chromosome"/>
</dbReference>
<dbReference type="GO" id="GO:0003677">
    <property type="term" value="F:DNA binding"/>
    <property type="evidence" value="ECO:0007669"/>
    <property type="project" value="UniProtKB-UniRule"/>
</dbReference>
<dbReference type="GO" id="GO:0004252">
    <property type="term" value="F:serine-type endopeptidase activity"/>
    <property type="evidence" value="ECO:0007669"/>
    <property type="project" value="UniProtKB-UniRule"/>
</dbReference>
<dbReference type="GO" id="GO:0006281">
    <property type="term" value="P:DNA repair"/>
    <property type="evidence" value="ECO:0007669"/>
    <property type="project" value="UniProtKB-UniRule"/>
</dbReference>
<dbReference type="GO" id="GO:0006260">
    <property type="term" value="P:DNA replication"/>
    <property type="evidence" value="ECO:0007669"/>
    <property type="project" value="UniProtKB-UniRule"/>
</dbReference>
<dbReference type="GO" id="GO:0045892">
    <property type="term" value="P:negative regulation of DNA-templated transcription"/>
    <property type="evidence" value="ECO:0007669"/>
    <property type="project" value="UniProtKB-UniRule"/>
</dbReference>
<dbReference type="GO" id="GO:0006508">
    <property type="term" value="P:proteolysis"/>
    <property type="evidence" value="ECO:0007669"/>
    <property type="project" value="InterPro"/>
</dbReference>
<dbReference type="GO" id="GO:0009432">
    <property type="term" value="P:SOS response"/>
    <property type="evidence" value="ECO:0007669"/>
    <property type="project" value="UniProtKB-UniRule"/>
</dbReference>
<dbReference type="CDD" id="cd06529">
    <property type="entry name" value="S24_LexA-like"/>
    <property type="match status" value="1"/>
</dbReference>
<dbReference type="FunFam" id="1.10.10.10:FF:000009">
    <property type="entry name" value="LexA repressor"/>
    <property type="match status" value="1"/>
</dbReference>
<dbReference type="FunFam" id="2.10.109.10:FF:000001">
    <property type="entry name" value="LexA repressor"/>
    <property type="match status" value="1"/>
</dbReference>
<dbReference type="Gene3D" id="2.10.109.10">
    <property type="entry name" value="Umud Fragment, subunit A"/>
    <property type="match status" value="1"/>
</dbReference>
<dbReference type="Gene3D" id="1.10.10.10">
    <property type="entry name" value="Winged helix-like DNA-binding domain superfamily/Winged helix DNA-binding domain"/>
    <property type="match status" value="1"/>
</dbReference>
<dbReference type="HAMAP" id="MF_00015">
    <property type="entry name" value="LexA"/>
    <property type="match status" value="1"/>
</dbReference>
<dbReference type="InterPro" id="IPR006200">
    <property type="entry name" value="LexA"/>
</dbReference>
<dbReference type="InterPro" id="IPR039418">
    <property type="entry name" value="LexA-like"/>
</dbReference>
<dbReference type="InterPro" id="IPR036286">
    <property type="entry name" value="LexA/Signal_pep-like_sf"/>
</dbReference>
<dbReference type="InterPro" id="IPR006199">
    <property type="entry name" value="LexA_DNA-bd_dom"/>
</dbReference>
<dbReference type="InterPro" id="IPR050077">
    <property type="entry name" value="LexA_repressor"/>
</dbReference>
<dbReference type="InterPro" id="IPR006197">
    <property type="entry name" value="Peptidase_S24_LexA"/>
</dbReference>
<dbReference type="InterPro" id="IPR015927">
    <property type="entry name" value="Peptidase_S24_S26A/B/C"/>
</dbReference>
<dbReference type="InterPro" id="IPR036388">
    <property type="entry name" value="WH-like_DNA-bd_sf"/>
</dbReference>
<dbReference type="InterPro" id="IPR036390">
    <property type="entry name" value="WH_DNA-bd_sf"/>
</dbReference>
<dbReference type="NCBIfam" id="TIGR00498">
    <property type="entry name" value="lexA"/>
    <property type="match status" value="1"/>
</dbReference>
<dbReference type="PANTHER" id="PTHR33516">
    <property type="entry name" value="LEXA REPRESSOR"/>
    <property type="match status" value="1"/>
</dbReference>
<dbReference type="PANTHER" id="PTHR33516:SF2">
    <property type="entry name" value="LEXA REPRESSOR-RELATED"/>
    <property type="match status" value="1"/>
</dbReference>
<dbReference type="Pfam" id="PF01726">
    <property type="entry name" value="LexA_DNA_bind"/>
    <property type="match status" value="1"/>
</dbReference>
<dbReference type="Pfam" id="PF00717">
    <property type="entry name" value="Peptidase_S24"/>
    <property type="match status" value="1"/>
</dbReference>
<dbReference type="PRINTS" id="PR00726">
    <property type="entry name" value="LEXASERPTASE"/>
</dbReference>
<dbReference type="SUPFAM" id="SSF51306">
    <property type="entry name" value="LexA/Signal peptidase"/>
    <property type="match status" value="1"/>
</dbReference>
<dbReference type="SUPFAM" id="SSF46785">
    <property type="entry name" value="Winged helix' DNA-binding domain"/>
    <property type="match status" value="1"/>
</dbReference>
<name>LEXA_CORDI</name>
<accession>P61607</accession>